<feature type="chain" id="PRO_0000334606" description="Metacaspase-8">
    <location>
        <begin position="1"/>
        <end position="381"/>
    </location>
</feature>
<feature type="active site" evidence="1">
    <location>
        <position position="86"/>
    </location>
</feature>
<feature type="active site">
    <location>
        <position position="140"/>
    </location>
</feature>
<feature type="modified residue" description="S-nitrosocysteine" evidence="2">
    <location>
        <position position="140"/>
    </location>
</feature>
<feature type="mutagenesis site" description="Loss of protease activity." evidence="3">
    <original>C</original>
    <variation>A</variation>
    <location>
        <position position="140"/>
    </location>
</feature>
<feature type="sequence conflict" description="In Ref. 5; BAD42967." evidence="4" ref="5">
    <original>D</original>
    <variation>G</variation>
    <location>
        <position position="99"/>
    </location>
</feature>
<dbReference type="EC" id="3.4.22.-"/>
<dbReference type="EMBL" id="AY219833">
    <property type="protein sequence ID" value="AAP44521.1"/>
    <property type="molecule type" value="mRNA"/>
</dbReference>
<dbReference type="EMBL" id="AY322530">
    <property type="protein sequence ID" value="AAP84711.1"/>
    <property type="molecule type" value="mRNA"/>
</dbReference>
<dbReference type="EMBL" id="AC006341">
    <property type="protein sequence ID" value="AAD34694.1"/>
    <property type="molecule type" value="Genomic_DNA"/>
</dbReference>
<dbReference type="EMBL" id="CP002684">
    <property type="protein sequence ID" value="AEE29449.1"/>
    <property type="molecule type" value="Genomic_DNA"/>
</dbReference>
<dbReference type="EMBL" id="AK175204">
    <property type="protein sequence ID" value="BAD42967.1"/>
    <property type="molecule type" value="mRNA"/>
</dbReference>
<dbReference type="PIR" id="E86299">
    <property type="entry name" value="E86299"/>
</dbReference>
<dbReference type="SMR" id="Q9SA41"/>
<dbReference type="BioGRID" id="23452">
    <property type="interactions" value="1"/>
</dbReference>
<dbReference type="FunCoup" id="Q9SA41">
    <property type="interactions" value="5"/>
</dbReference>
<dbReference type="STRING" id="3702.Q9SA41"/>
<dbReference type="MEROPS" id="C14.046"/>
<dbReference type="iPTMnet" id="Q9SA41"/>
<dbReference type="PaxDb" id="3702-AT1G16420.1"/>
<dbReference type="EnsemblPlants" id="AT1G16420.1">
    <property type="protein sequence ID" value="AT1G16420.1"/>
    <property type="gene ID" value="AT1G16420"/>
</dbReference>
<dbReference type="GeneID" id="838212"/>
<dbReference type="Gramene" id="AT1G16420.1">
    <property type="protein sequence ID" value="AT1G16420.1"/>
    <property type="gene ID" value="AT1G16420"/>
</dbReference>
<dbReference type="KEGG" id="ath:AT1G16420"/>
<dbReference type="Araport" id="AT1G16420"/>
<dbReference type="TAIR" id="AT1G16420">
    <property type="gene designation" value="MC8"/>
</dbReference>
<dbReference type="eggNOG" id="KOG1546">
    <property type="taxonomic scope" value="Eukaryota"/>
</dbReference>
<dbReference type="HOGENOM" id="CLU_029389_4_1_1"/>
<dbReference type="InParanoid" id="Q9SA41"/>
<dbReference type="OMA" id="FLVFHYS"/>
<dbReference type="PhylomeDB" id="Q9SA41"/>
<dbReference type="PRO" id="PR:Q9SA41"/>
<dbReference type="Proteomes" id="UP000006548">
    <property type="component" value="Chromosome 1"/>
</dbReference>
<dbReference type="ExpressionAtlas" id="Q9SA41">
    <property type="expression patterns" value="baseline and differential"/>
</dbReference>
<dbReference type="GO" id="GO:0004197">
    <property type="term" value="F:cysteine-type endopeptidase activity"/>
    <property type="evidence" value="ECO:0000314"/>
    <property type="project" value="TAIR"/>
</dbReference>
<dbReference type="GO" id="GO:0010421">
    <property type="term" value="P:hydrogen peroxide-mediated programmed cell death"/>
    <property type="evidence" value="ECO:0000315"/>
    <property type="project" value="TAIR"/>
</dbReference>
<dbReference type="GO" id="GO:0012501">
    <property type="term" value="P:programmed cell death"/>
    <property type="evidence" value="ECO:0000315"/>
    <property type="project" value="TAIR"/>
</dbReference>
<dbReference type="GO" id="GO:0006508">
    <property type="term" value="P:proteolysis"/>
    <property type="evidence" value="ECO:0007669"/>
    <property type="project" value="UniProtKB-KW"/>
</dbReference>
<dbReference type="GO" id="GO:0042542">
    <property type="term" value="P:response to hydrogen peroxide"/>
    <property type="evidence" value="ECO:0000315"/>
    <property type="project" value="TAIR"/>
</dbReference>
<dbReference type="GO" id="GO:0006979">
    <property type="term" value="P:response to oxidative stress"/>
    <property type="evidence" value="ECO:0000315"/>
    <property type="project" value="TAIR"/>
</dbReference>
<dbReference type="GO" id="GO:0010225">
    <property type="term" value="P:response to UV-C"/>
    <property type="evidence" value="ECO:0000270"/>
    <property type="project" value="TAIR"/>
</dbReference>
<dbReference type="FunFam" id="3.40.50.12660:FF:000010">
    <property type="entry name" value="Metacaspase-9"/>
    <property type="match status" value="1"/>
</dbReference>
<dbReference type="Gene3D" id="3.40.50.12660">
    <property type="match status" value="2"/>
</dbReference>
<dbReference type="InterPro" id="IPR050452">
    <property type="entry name" value="Metacaspase"/>
</dbReference>
<dbReference type="InterPro" id="IPR011600">
    <property type="entry name" value="Pept_C14_caspase"/>
</dbReference>
<dbReference type="PANTHER" id="PTHR48104">
    <property type="entry name" value="METACASPASE-4"/>
    <property type="match status" value="1"/>
</dbReference>
<dbReference type="PANTHER" id="PTHR48104:SF18">
    <property type="entry name" value="METACASPASE-8"/>
    <property type="match status" value="1"/>
</dbReference>
<dbReference type="Pfam" id="PF00656">
    <property type="entry name" value="Peptidase_C14"/>
    <property type="match status" value="1"/>
</dbReference>
<sequence>MAKKALLIGINYPGTAVELRGCVNDVHRMQKCLIELYGFANKDIVIMIDTDKSCIQPTGKNICDELDNLIASGQSGDFLVFHYSGHGTRIPPGIEDSEDPTGFDECITPCDMNLIKDQQFREMVSRVKEGCQLTIISDSCHSGGLIQEVKEQIGESHMKPVDKVKEQIEESHMKQPKLGIASYFLNIVMNLLATCGVSKSQRDRGGGEESFRGEIELEKDETLDIKTRYLPFESYLSLLKEQTGQTNIEPVRIRQTLLKLFGEDPSPNRQRGLSDLGNCEVDAGDSGASRLNAVTDNGILLSGCQTDQRSEDVYVTRTGKAYGAFSDAIQMILSAPRKDKKKITNKELVSEARVFLKKRGYSQRPGLYCHDRFVDKPFICY</sequence>
<comment type="function">
    <text evidence="3">Cysteine protease that cleaves specifically after arginine residues. Does not cleave caspase-specific substrates. May be involved in the modulation of programmed cell death activated by oxidative stress.</text>
</comment>
<comment type="biophysicochemical properties">
    <phDependence>
        <text evidence="3">Optimum pH is 7.5-8.5 with t-butoxycarbonyl-GRR-aminomethylcoumarin as substrate.</text>
    </phDependence>
</comment>
<comment type="induction">
    <text evidence="3">By UV-C light, hydrogen peroxide and methyl viologen.</text>
</comment>
<comment type="PTM">
    <text>Proteolytically processed; by an autocatalytic mechanism.</text>
</comment>
<comment type="similarity">
    <text evidence="4">Belongs to the peptidase C14B family.</text>
</comment>
<gene>
    <name type="primary">AMC8</name>
    <name type="synonym">MCP2E</name>
    <name type="ordered locus">At1g16420</name>
    <name type="ORF">F3O9.22</name>
</gene>
<protein>
    <recommendedName>
        <fullName>Metacaspase-8</fullName>
        <shortName>AtMC8</shortName>
        <ecNumber>3.4.22.-</ecNumber>
    </recommendedName>
    <alternativeName>
        <fullName>Metacaspase 2e</fullName>
        <shortName>AtMCP2e</shortName>
    </alternativeName>
</protein>
<keyword id="KW-0068">Autocatalytic cleavage</keyword>
<keyword id="KW-0378">Hydrolase</keyword>
<keyword id="KW-0645">Protease</keyword>
<keyword id="KW-1185">Reference proteome</keyword>
<keyword id="KW-0702">S-nitrosylation</keyword>
<keyword id="KW-0788">Thiol protease</keyword>
<organism>
    <name type="scientific">Arabidopsis thaliana</name>
    <name type="common">Mouse-ear cress</name>
    <dbReference type="NCBI Taxonomy" id="3702"/>
    <lineage>
        <taxon>Eukaryota</taxon>
        <taxon>Viridiplantae</taxon>
        <taxon>Streptophyta</taxon>
        <taxon>Embryophyta</taxon>
        <taxon>Tracheophyta</taxon>
        <taxon>Spermatophyta</taxon>
        <taxon>Magnoliopsida</taxon>
        <taxon>eudicotyledons</taxon>
        <taxon>Gunneridae</taxon>
        <taxon>Pentapetalae</taxon>
        <taxon>rosids</taxon>
        <taxon>malvids</taxon>
        <taxon>Brassicales</taxon>
        <taxon>Brassicaceae</taxon>
        <taxon>Camelineae</taxon>
        <taxon>Arabidopsis</taxon>
    </lineage>
</organism>
<evidence type="ECO:0000250" key="1"/>
<evidence type="ECO:0000250" key="2">
    <source>
        <dbReference type="UniProtKB" id="Q9FYE1"/>
    </source>
</evidence>
<evidence type="ECO:0000269" key="3">
    <source>
    </source>
</evidence>
<evidence type="ECO:0000305" key="4"/>
<name>MCA8_ARATH</name>
<accession>Q9SA41</accession>
<accession>Q683B3</accession>
<proteinExistence type="evidence at protein level"/>
<reference key="1">
    <citation type="journal article" date="2004" name="J. Biol. Chem.">
        <title>Type II metacaspases Atmc4 and Atmc9 of Arabidopsis thaliana cleave substrates after arginine and lysine.</title>
        <authorList>
            <person name="Vercammen D."/>
            <person name="van de Cotte B."/>
            <person name="De Jaeger G."/>
            <person name="Eeckhout D."/>
            <person name="Casteels P."/>
            <person name="Vandepoele K."/>
            <person name="Vandenberghe I."/>
            <person name="van Beeumen J."/>
            <person name="Inze D."/>
            <person name="van Breusegem F."/>
        </authorList>
    </citation>
    <scope>NUCLEOTIDE SEQUENCE [MRNA]</scope>
    <scope>AUTOCATALYTIC CLEAVAGE</scope>
    <scope>GENE FAMILY</scope>
    <scope>NOMENCLATURE</scope>
</reference>
<reference key="2">
    <citation type="submission" date="2003-06" db="EMBL/GenBank/DDBJ databases">
        <title>Characterization of metacaspases.</title>
        <authorList>
            <person name="Ikeda Y."/>
            <person name="Krishnamurthy N."/>
            <person name="Chua N.-H."/>
        </authorList>
    </citation>
    <scope>NUCLEOTIDE SEQUENCE [MRNA]</scope>
</reference>
<reference key="3">
    <citation type="journal article" date="2000" name="Nature">
        <title>Sequence and analysis of chromosome 1 of the plant Arabidopsis thaliana.</title>
        <authorList>
            <person name="Theologis A."/>
            <person name="Ecker J.R."/>
            <person name="Palm C.J."/>
            <person name="Federspiel N.A."/>
            <person name="Kaul S."/>
            <person name="White O."/>
            <person name="Alonso J."/>
            <person name="Altafi H."/>
            <person name="Araujo R."/>
            <person name="Bowman C.L."/>
            <person name="Brooks S.Y."/>
            <person name="Buehler E."/>
            <person name="Chan A."/>
            <person name="Chao Q."/>
            <person name="Chen H."/>
            <person name="Cheuk R.F."/>
            <person name="Chin C.W."/>
            <person name="Chung M.K."/>
            <person name="Conn L."/>
            <person name="Conway A.B."/>
            <person name="Conway A.R."/>
            <person name="Creasy T.H."/>
            <person name="Dewar K."/>
            <person name="Dunn P."/>
            <person name="Etgu P."/>
            <person name="Feldblyum T.V."/>
            <person name="Feng J.-D."/>
            <person name="Fong B."/>
            <person name="Fujii C.Y."/>
            <person name="Gill J.E."/>
            <person name="Goldsmith A.D."/>
            <person name="Haas B."/>
            <person name="Hansen N.F."/>
            <person name="Hughes B."/>
            <person name="Huizar L."/>
            <person name="Hunter J.L."/>
            <person name="Jenkins J."/>
            <person name="Johnson-Hopson C."/>
            <person name="Khan S."/>
            <person name="Khaykin E."/>
            <person name="Kim C.J."/>
            <person name="Koo H.L."/>
            <person name="Kremenetskaia I."/>
            <person name="Kurtz D.B."/>
            <person name="Kwan A."/>
            <person name="Lam B."/>
            <person name="Langin-Hooper S."/>
            <person name="Lee A."/>
            <person name="Lee J.M."/>
            <person name="Lenz C.A."/>
            <person name="Li J.H."/>
            <person name="Li Y.-P."/>
            <person name="Lin X."/>
            <person name="Liu S.X."/>
            <person name="Liu Z.A."/>
            <person name="Luros J.S."/>
            <person name="Maiti R."/>
            <person name="Marziali A."/>
            <person name="Militscher J."/>
            <person name="Miranda M."/>
            <person name="Nguyen M."/>
            <person name="Nierman W.C."/>
            <person name="Osborne B.I."/>
            <person name="Pai G."/>
            <person name="Peterson J."/>
            <person name="Pham P.K."/>
            <person name="Rizzo M."/>
            <person name="Rooney T."/>
            <person name="Rowley D."/>
            <person name="Sakano H."/>
            <person name="Salzberg S.L."/>
            <person name="Schwartz J.R."/>
            <person name="Shinn P."/>
            <person name="Southwick A.M."/>
            <person name="Sun H."/>
            <person name="Tallon L.J."/>
            <person name="Tambunga G."/>
            <person name="Toriumi M.J."/>
            <person name="Town C.D."/>
            <person name="Utterback T."/>
            <person name="Van Aken S."/>
            <person name="Vaysberg M."/>
            <person name="Vysotskaia V.S."/>
            <person name="Walker M."/>
            <person name="Wu D."/>
            <person name="Yu G."/>
            <person name="Fraser C.M."/>
            <person name="Venter J.C."/>
            <person name="Davis R.W."/>
        </authorList>
    </citation>
    <scope>NUCLEOTIDE SEQUENCE [LARGE SCALE GENOMIC DNA]</scope>
    <source>
        <strain>cv. Columbia</strain>
    </source>
</reference>
<reference key="4">
    <citation type="journal article" date="2017" name="Plant J.">
        <title>Araport11: a complete reannotation of the Arabidopsis thaliana reference genome.</title>
        <authorList>
            <person name="Cheng C.Y."/>
            <person name="Krishnakumar V."/>
            <person name="Chan A.P."/>
            <person name="Thibaud-Nissen F."/>
            <person name="Schobel S."/>
            <person name="Town C.D."/>
        </authorList>
    </citation>
    <scope>GENOME REANNOTATION</scope>
    <source>
        <strain>cv. Columbia</strain>
    </source>
</reference>
<reference key="5">
    <citation type="submission" date="2004-09" db="EMBL/GenBank/DDBJ databases">
        <title>Large-scale analysis of RIKEN Arabidopsis full-length (RAFL) cDNAs.</title>
        <authorList>
            <person name="Totoki Y."/>
            <person name="Seki M."/>
            <person name="Ishida J."/>
            <person name="Nakajima M."/>
            <person name="Enju A."/>
            <person name="Kamiya A."/>
            <person name="Narusaka M."/>
            <person name="Shin-i T."/>
            <person name="Nakagawa M."/>
            <person name="Sakamoto N."/>
            <person name="Oishi K."/>
            <person name="Kohara Y."/>
            <person name="Kobayashi M."/>
            <person name="Toyoda A."/>
            <person name="Sakaki Y."/>
            <person name="Sakurai T."/>
            <person name="Iida K."/>
            <person name="Akiyama K."/>
            <person name="Satou M."/>
            <person name="Toyoda T."/>
            <person name="Konagaya A."/>
            <person name="Carninci P."/>
            <person name="Kawai J."/>
            <person name="Hayashizaki Y."/>
            <person name="Shinozaki K."/>
        </authorList>
    </citation>
    <scope>NUCLEOTIDE SEQUENCE [LARGE SCALE MRNA]</scope>
    <source>
        <strain>cv. Columbia</strain>
    </source>
</reference>
<reference key="6">
    <citation type="journal article" date="2004" name="Mol. Plant Pathol.">
        <title>Recent advance in the study of caspase-like proteases and Bax inhibitor-1 in plants: their possible roles as regulator of programmed cell death.</title>
        <authorList>
            <person name="Watanabe N."/>
            <person name="Lam E."/>
        </authorList>
    </citation>
    <scope>GENE FAMILY</scope>
</reference>
<reference key="7">
    <citation type="journal article" date="2008" name="J. Biol. Chem.">
        <title>Metacaspase-8 modulates programmed cell death induced by ultraviolet light and H2O2 in Arabidopsis.</title>
        <authorList>
            <person name="He R."/>
            <person name="Drury G.E."/>
            <person name="Rotari V.I."/>
            <person name="Gordon A."/>
            <person name="Willer M."/>
            <person name="Farzaneh T."/>
            <person name="Woltering E.J."/>
            <person name="Gallois P."/>
        </authorList>
    </citation>
    <scope>FUNCTION</scope>
    <scope>BIOPHYSICOCHEMICAL PROPERTIES</scope>
    <scope>INDUCTION</scope>
    <scope>MUTAGENESIS OF CYS-140</scope>
</reference>